<organism>
    <name type="scientific">Oryza sativa subsp. japonica</name>
    <name type="common">Rice</name>
    <dbReference type="NCBI Taxonomy" id="39947"/>
    <lineage>
        <taxon>Eukaryota</taxon>
        <taxon>Viridiplantae</taxon>
        <taxon>Streptophyta</taxon>
        <taxon>Embryophyta</taxon>
        <taxon>Tracheophyta</taxon>
        <taxon>Spermatophyta</taxon>
        <taxon>Magnoliopsida</taxon>
        <taxon>Liliopsida</taxon>
        <taxon>Poales</taxon>
        <taxon>Poaceae</taxon>
        <taxon>BOP clade</taxon>
        <taxon>Oryzoideae</taxon>
        <taxon>Oryzeae</taxon>
        <taxon>Oryzinae</taxon>
        <taxon>Oryza</taxon>
        <taxon>Oryza sativa</taxon>
    </lineage>
</organism>
<protein>
    <recommendedName>
        <fullName evidence="5">GRF-interacting factor 1</fullName>
        <shortName evidence="5">OsGIF1</shortName>
    </recommendedName>
    <alternativeName>
        <fullName evidence="6">Protein ANGUSTIFOLIA 3 homolog</fullName>
    </alternativeName>
    <alternativeName>
        <fullName evidence="6">Protein MAKIBA 3</fullName>
    </alternativeName>
</protein>
<sequence length="227" mass="23525">MQQQHLMQMNQGMMGGYASPTTVTTDLIQQYLDENKQLILAILDNQNNGKVEECARNQAKLQHNLMYLAAIADSQPPQTAAMSQYPSNLMMQSGARYMPQQSAQMMAPQSLMAARSSMMYAQPALSPLQQQQQQQAAAAHGQLGMGSGGTTSGFSILHGEASMGGGGGGGGAGNSMMNAGVFSDFGRGGGGGGKEGSTSLSVDVRGANSGAQSGDGEYLKGTEEEGS</sequence>
<proteinExistence type="evidence at protein level"/>
<evidence type="ECO:0000256" key="1">
    <source>
        <dbReference type="SAM" id="MobiDB-lite"/>
    </source>
</evidence>
<evidence type="ECO:0000269" key="2">
    <source>
    </source>
</evidence>
<evidence type="ECO:0000269" key="3">
    <source>
    </source>
</evidence>
<evidence type="ECO:0000269" key="4">
    <source>
    </source>
</evidence>
<evidence type="ECO:0000303" key="5">
    <source>
    </source>
</evidence>
<evidence type="ECO:0000303" key="6">
    <source>
    </source>
</evidence>
<evidence type="ECO:0000305" key="7"/>
<evidence type="ECO:0000305" key="8">
    <source>
    </source>
</evidence>
<evidence type="ECO:0000305" key="9">
    <source>
    </source>
</evidence>
<evidence type="ECO:0000312" key="10">
    <source>
        <dbReference type="EMBL" id="AAT77876.1"/>
    </source>
</evidence>
<evidence type="ECO:0000312" key="11">
    <source>
        <dbReference type="EMBL" id="AAT78786.1"/>
    </source>
</evidence>
<evidence type="ECO:0000312" key="12">
    <source>
        <dbReference type="EMBL" id="ABF98717.1"/>
    </source>
</evidence>
<evidence type="ECO:0000312" key="13">
    <source>
        <dbReference type="EMBL" id="BAF13088.1"/>
    </source>
</evidence>
<feature type="chain" id="PRO_0000445646" description="GRF-interacting factor 1">
    <location>
        <begin position="1"/>
        <end position="227"/>
    </location>
</feature>
<feature type="region of interest" description="Disordered" evidence="1">
    <location>
        <begin position="124"/>
        <end position="160"/>
    </location>
</feature>
<feature type="region of interest" description="Disordered" evidence="1">
    <location>
        <begin position="188"/>
        <end position="227"/>
    </location>
</feature>
<feature type="compositionally biased region" description="Low complexity" evidence="1">
    <location>
        <begin position="124"/>
        <end position="139"/>
    </location>
</feature>
<feature type="compositionally biased region" description="Basic and acidic residues" evidence="1">
    <location>
        <begin position="217"/>
        <end position="227"/>
    </location>
</feature>
<keyword id="KW-0010">Activator</keyword>
<keyword id="KW-0963">Cytoplasm</keyword>
<keyword id="KW-0539">Nucleus</keyword>
<keyword id="KW-1185">Reference proteome</keyword>
<keyword id="KW-0804">Transcription</keyword>
<keyword id="KW-0805">Transcription regulation</keyword>
<dbReference type="EMBL" id="BR001474">
    <property type="protein sequence ID" value="FAA01258.1"/>
    <property type="molecule type" value="mRNA"/>
</dbReference>
<dbReference type="EMBL" id="AC103550">
    <property type="protein sequence ID" value="AAT77876.1"/>
    <property type="molecule type" value="Genomic_DNA"/>
</dbReference>
<dbReference type="EMBL" id="AC096689">
    <property type="protein sequence ID" value="AAT78786.1"/>
    <property type="molecule type" value="Genomic_DNA"/>
</dbReference>
<dbReference type="EMBL" id="DP000009">
    <property type="protein sequence ID" value="ABF98717.1"/>
    <property type="molecule type" value="Genomic_DNA"/>
</dbReference>
<dbReference type="EMBL" id="AP008209">
    <property type="protein sequence ID" value="BAF13088.1"/>
    <property type="molecule type" value="Genomic_DNA"/>
</dbReference>
<dbReference type="EMBL" id="AP014959">
    <property type="protein sequence ID" value="BAS86238.1"/>
    <property type="molecule type" value="Genomic_DNA"/>
</dbReference>
<dbReference type="EMBL" id="AK058575">
    <property type="protein sequence ID" value="BAG86739.1"/>
    <property type="molecule type" value="mRNA"/>
</dbReference>
<dbReference type="RefSeq" id="XP_015629684.1">
    <property type="nucleotide sequence ID" value="XM_015774198.1"/>
</dbReference>
<dbReference type="SMR" id="Q6AVI1"/>
<dbReference type="FunCoup" id="Q6AVI1">
    <property type="interactions" value="2568"/>
</dbReference>
<dbReference type="STRING" id="39947.Q6AVI1"/>
<dbReference type="PaxDb" id="39947-Q6AVI1"/>
<dbReference type="EnsemblPlants" id="Os03t0733600-01">
    <property type="protein sequence ID" value="Os03t0733600-01"/>
    <property type="gene ID" value="Os03g0733600"/>
</dbReference>
<dbReference type="Gramene" id="Os03t0733600-01">
    <property type="protein sequence ID" value="Os03t0733600-01"/>
    <property type="gene ID" value="Os03g0733600"/>
</dbReference>
<dbReference type="KEGG" id="dosa:Os03g0733600"/>
<dbReference type="eggNOG" id="KOG3227">
    <property type="taxonomic scope" value="Eukaryota"/>
</dbReference>
<dbReference type="HOGENOM" id="CLU_086253_0_0_1"/>
<dbReference type="InParanoid" id="Q6AVI1"/>
<dbReference type="OMA" id="MIPTFAT"/>
<dbReference type="OrthoDB" id="10265171at2759"/>
<dbReference type="PlantReactome" id="R-OSA-9035605">
    <property type="pathway name" value="Regulation of seed size"/>
</dbReference>
<dbReference type="PlantReactome" id="R-OSA-9608575">
    <property type="pathway name" value="Reproductive meristem phase change"/>
</dbReference>
<dbReference type="PlantReactome" id="R-OSA-9627657">
    <property type="pathway name" value="Regulation of leaf development"/>
</dbReference>
<dbReference type="Proteomes" id="UP000000763">
    <property type="component" value="Chromosome 3"/>
</dbReference>
<dbReference type="Proteomes" id="UP000059680">
    <property type="component" value="Chromosome 3"/>
</dbReference>
<dbReference type="GO" id="GO:0005737">
    <property type="term" value="C:cytoplasm"/>
    <property type="evidence" value="ECO:0000314"/>
    <property type="project" value="UniProtKB"/>
</dbReference>
<dbReference type="GO" id="GO:0005634">
    <property type="term" value="C:nucleus"/>
    <property type="evidence" value="ECO:0000314"/>
    <property type="project" value="UniProtKB"/>
</dbReference>
<dbReference type="GO" id="GO:0048366">
    <property type="term" value="P:leaf development"/>
    <property type="evidence" value="ECO:0000315"/>
    <property type="project" value="UniProtKB"/>
</dbReference>
<dbReference type="GO" id="GO:0045893">
    <property type="term" value="P:positive regulation of DNA-templated transcription"/>
    <property type="evidence" value="ECO:0000314"/>
    <property type="project" value="UniProtKB"/>
</dbReference>
<dbReference type="GO" id="GO:0048316">
    <property type="term" value="P:seed development"/>
    <property type="evidence" value="ECO:0000315"/>
    <property type="project" value="UniProtKB"/>
</dbReference>
<dbReference type="InterPro" id="IPR007726">
    <property type="entry name" value="SS18_N"/>
</dbReference>
<dbReference type="Pfam" id="PF05030">
    <property type="entry name" value="SSXT"/>
    <property type="match status" value="1"/>
</dbReference>
<reference key="1">
    <citation type="journal article" date="2018" name="Development">
        <title>Conserved functional control, but distinct regulation, of cell proliferation in rice and Arabidopsis leaves revealed by comparative analysis of GRF-INTERACTING FACTOR 1 orthologs.</title>
        <authorList>
            <person name="Shimano S."/>
            <person name="Hibara K.I."/>
            <person name="Furuya T."/>
            <person name="Arimura S.I."/>
            <person name="Tsukaya H."/>
            <person name="Itoh J.I."/>
        </authorList>
    </citation>
    <scope>NUCLEOTIDE SEQUENCE [MRNA]</scope>
    <scope>FUNCTION</scope>
    <scope>DISRUPTION PHENOTYPE</scope>
    <source>
        <strain>cv. Taichung 65</strain>
    </source>
</reference>
<reference key="2">
    <citation type="journal article" date="2005" name="Genome Res.">
        <title>Sequence, annotation, and analysis of synteny between rice chromosome 3 and diverged grass species.</title>
        <authorList>
            <consortium name="The rice chromosome 3 sequencing consortium"/>
            <person name="Buell C.R."/>
            <person name="Yuan Q."/>
            <person name="Ouyang S."/>
            <person name="Liu J."/>
            <person name="Zhu W."/>
            <person name="Wang A."/>
            <person name="Maiti R."/>
            <person name="Haas B."/>
            <person name="Wortman J."/>
            <person name="Pertea M."/>
            <person name="Jones K.M."/>
            <person name="Kim M."/>
            <person name="Overton L."/>
            <person name="Tsitrin T."/>
            <person name="Fadrosh D."/>
            <person name="Bera J."/>
            <person name="Weaver B."/>
            <person name="Jin S."/>
            <person name="Johri S."/>
            <person name="Reardon M."/>
            <person name="Webb K."/>
            <person name="Hill J."/>
            <person name="Moffat K."/>
            <person name="Tallon L."/>
            <person name="Van Aken S."/>
            <person name="Lewis M."/>
            <person name="Utterback T."/>
            <person name="Feldblyum T."/>
            <person name="Zismann V."/>
            <person name="Iobst S."/>
            <person name="Hsiao J."/>
            <person name="de Vazeille A.R."/>
            <person name="Salzberg S.L."/>
            <person name="White O."/>
            <person name="Fraser C.M."/>
            <person name="Yu Y."/>
            <person name="Kim H."/>
            <person name="Rambo T."/>
            <person name="Currie J."/>
            <person name="Collura K."/>
            <person name="Kernodle-Thompson S."/>
            <person name="Wei F."/>
            <person name="Kudrna K."/>
            <person name="Ammiraju J.S.S."/>
            <person name="Luo M."/>
            <person name="Goicoechea J.L."/>
            <person name="Wing R.A."/>
            <person name="Henry D."/>
            <person name="Oates R."/>
            <person name="Palmer M."/>
            <person name="Pries G."/>
            <person name="Saski C."/>
            <person name="Simmons J."/>
            <person name="Soderlund C."/>
            <person name="Nelson W."/>
            <person name="de la Bastide M."/>
            <person name="Spiegel L."/>
            <person name="Nascimento L."/>
            <person name="Huang E."/>
            <person name="Preston R."/>
            <person name="Zutavern T."/>
            <person name="Palmer L."/>
            <person name="O'Shaughnessy A."/>
            <person name="Dike S."/>
            <person name="McCombie W.R."/>
            <person name="Minx P."/>
            <person name="Cordum H."/>
            <person name="Wilson R."/>
            <person name="Jin W."/>
            <person name="Lee H.R."/>
            <person name="Jiang J."/>
            <person name="Jackson S."/>
        </authorList>
    </citation>
    <scope>NUCLEOTIDE SEQUENCE [LARGE SCALE GENOMIC DNA]</scope>
    <source>
        <strain>cv. Nipponbare</strain>
    </source>
</reference>
<reference key="3">
    <citation type="journal article" date="2005" name="Nature">
        <title>The map-based sequence of the rice genome.</title>
        <authorList>
            <consortium name="International rice genome sequencing project (IRGSP)"/>
        </authorList>
    </citation>
    <scope>NUCLEOTIDE SEQUENCE [LARGE SCALE GENOMIC DNA]</scope>
    <source>
        <strain>cv. Nipponbare</strain>
    </source>
</reference>
<reference key="4">
    <citation type="journal article" date="2008" name="Nucleic Acids Res.">
        <title>The rice annotation project database (RAP-DB): 2008 update.</title>
        <authorList>
            <consortium name="The rice annotation project (RAP)"/>
        </authorList>
    </citation>
    <scope>GENOME REANNOTATION</scope>
    <source>
        <strain>cv. Nipponbare</strain>
    </source>
</reference>
<reference key="5">
    <citation type="journal article" date="2013" name="Rice">
        <title>Improvement of the Oryza sativa Nipponbare reference genome using next generation sequence and optical map data.</title>
        <authorList>
            <person name="Kawahara Y."/>
            <person name="de la Bastide M."/>
            <person name="Hamilton J.P."/>
            <person name="Kanamori H."/>
            <person name="McCombie W.R."/>
            <person name="Ouyang S."/>
            <person name="Schwartz D.C."/>
            <person name="Tanaka T."/>
            <person name="Wu J."/>
            <person name="Zhou S."/>
            <person name="Childs K.L."/>
            <person name="Davidson R.M."/>
            <person name="Lin H."/>
            <person name="Quesada-Ocampo L."/>
            <person name="Vaillancourt B."/>
            <person name="Sakai H."/>
            <person name="Lee S.S."/>
            <person name="Kim J."/>
            <person name="Numa H."/>
            <person name="Itoh T."/>
            <person name="Buell C.R."/>
            <person name="Matsumoto T."/>
        </authorList>
    </citation>
    <scope>GENOME REANNOTATION</scope>
    <source>
        <strain>cv. Nipponbare</strain>
    </source>
</reference>
<reference key="6">
    <citation type="journal article" date="2005" name="PLoS Biol.">
        <title>The genomes of Oryza sativa: a history of duplications.</title>
        <authorList>
            <person name="Yu J."/>
            <person name="Wang J."/>
            <person name="Lin W."/>
            <person name="Li S."/>
            <person name="Li H."/>
            <person name="Zhou J."/>
            <person name="Ni P."/>
            <person name="Dong W."/>
            <person name="Hu S."/>
            <person name="Zeng C."/>
            <person name="Zhang J."/>
            <person name="Zhang Y."/>
            <person name="Li R."/>
            <person name="Xu Z."/>
            <person name="Li S."/>
            <person name="Li X."/>
            <person name="Zheng H."/>
            <person name="Cong L."/>
            <person name="Lin L."/>
            <person name="Yin J."/>
            <person name="Geng J."/>
            <person name="Li G."/>
            <person name="Shi J."/>
            <person name="Liu J."/>
            <person name="Lv H."/>
            <person name="Li J."/>
            <person name="Wang J."/>
            <person name="Deng Y."/>
            <person name="Ran L."/>
            <person name="Shi X."/>
            <person name="Wang X."/>
            <person name="Wu Q."/>
            <person name="Li C."/>
            <person name="Ren X."/>
            <person name="Wang J."/>
            <person name="Wang X."/>
            <person name="Li D."/>
            <person name="Liu D."/>
            <person name="Zhang X."/>
            <person name="Ji Z."/>
            <person name="Zhao W."/>
            <person name="Sun Y."/>
            <person name="Zhang Z."/>
            <person name="Bao J."/>
            <person name="Han Y."/>
            <person name="Dong L."/>
            <person name="Ji J."/>
            <person name="Chen P."/>
            <person name="Wu S."/>
            <person name="Liu J."/>
            <person name="Xiao Y."/>
            <person name="Bu D."/>
            <person name="Tan J."/>
            <person name="Yang L."/>
            <person name="Ye C."/>
            <person name="Zhang J."/>
            <person name="Xu J."/>
            <person name="Zhou Y."/>
            <person name="Yu Y."/>
            <person name="Zhang B."/>
            <person name="Zhuang S."/>
            <person name="Wei H."/>
            <person name="Liu B."/>
            <person name="Lei M."/>
            <person name="Yu H."/>
            <person name="Li Y."/>
            <person name="Xu H."/>
            <person name="Wei S."/>
            <person name="He X."/>
            <person name="Fang L."/>
            <person name="Zhang Z."/>
            <person name="Zhang Y."/>
            <person name="Huang X."/>
            <person name="Su Z."/>
            <person name="Tong W."/>
            <person name="Li J."/>
            <person name="Tong Z."/>
            <person name="Li S."/>
            <person name="Ye J."/>
            <person name="Wang L."/>
            <person name="Fang L."/>
            <person name="Lei T."/>
            <person name="Chen C.-S."/>
            <person name="Chen H.-C."/>
            <person name="Xu Z."/>
            <person name="Li H."/>
            <person name="Huang H."/>
            <person name="Zhang F."/>
            <person name="Xu H."/>
            <person name="Li N."/>
            <person name="Zhao C."/>
            <person name="Li S."/>
            <person name="Dong L."/>
            <person name="Huang Y."/>
            <person name="Li L."/>
            <person name="Xi Y."/>
            <person name="Qi Q."/>
            <person name="Li W."/>
            <person name="Zhang B."/>
            <person name="Hu W."/>
            <person name="Zhang Y."/>
            <person name="Tian X."/>
            <person name="Jiao Y."/>
            <person name="Liang X."/>
            <person name="Jin J."/>
            <person name="Gao L."/>
            <person name="Zheng W."/>
            <person name="Hao B."/>
            <person name="Liu S.-M."/>
            <person name="Wang W."/>
            <person name="Yuan L."/>
            <person name="Cao M."/>
            <person name="McDermott J."/>
            <person name="Samudrala R."/>
            <person name="Wang J."/>
            <person name="Wong G.K.-S."/>
            <person name="Yang H."/>
        </authorList>
    </citation>
    <scope>NUCLEOTIDE SEQUENCE [LARGE SCALE GENOMIC DNA]</scope>
    <source>
        <strain>cv. Nipponbare</strain>
    </source>
</reference>
<reference key="7">
    <citation type="journal article" date="2003" name="Science">
        <title>Collection, mapping, and annotation of over 28,000 cDNA clones from japonica rice.</title>
        <authorList>
            <consortium name="The rice full-length cDNA consortium"/>
        </authorList>
    </citation>
    <scope>NUCLEOTIDE SEQUENCE [LARGE SCALE MRNA]</scope>
    <source>
        <strain>cv. Nipponbare</strain>
    </source>
</reference>
<reference key="8">
    <citation type="journal article" date="2016" name="Plant Biotechnol. J.">
        <title>The OsmiR396c-OsGRF4-OsGIF1 regulatory module determines grain size and yield in rice.</title>
        <authorList>
            <person name="Li S."/>
            <person name="Gao F."/>
            <person name="Xie K."/>
            <person name="Zeng X."/>
            <person name="Cao Y."/>
            <person name="Zeng J."/>
            <person name="He Z."/>
            <person name="Ren Y."/>
            <person name="Li W."/>
            <person name="Deng Q."/>
            <person name="Wang S."/>
            <person name="Zheng A."/>
            <person name="Zhu J."/>
            <person name="Liu H."/>
            <person name="Wang L."/>
            <person name="Li P."/>
        </authorList>
    </citation>
    <scope>FUNCTION</scope>
    <scope>INTERACTION WITH GRF4</scope>
</reference>
<reference key="9">
    <citation type="journal article" date="2017" name="Front. Plant Sci.">
        <title>OsGIF1 positively regulates the sizes of stems, leaves, and grains in rice.</title>
        <authorList>
            <person name="He Z."/>
            <person name="Zeng J."/>
            <person name="Ren Y."/>
            <person name="Chen D."/>
            <person name="Li W."/>
            <person name="Gao F."/>
            <person name="Cao Y."/>
            <person name="Luo T."/>
            <person name="Yuan G."/>
            <person name="Wu X."/>
            <person name="Liang Y."/>
            <person name="Deng Q."/>
            <person name="Wang S."/>
            <person name="Zheng A."/>
            <person name="Zhu J."/>
            <person name="Liu H."/>
            <person name="Wang L."/>
            <person name="Li P."/>
            <person name="Li S."/>
        </authorList>
    </citation>
    <scope>FUNCTION</scope>
    <scope>SUBCELLULAR LOCATION</scope>
    <scope>TISSUE SPECIFICITY</scope>
</reference>
<comment type="function">
    <text evidence="2 3 4 8 9">Transcription coactivator that plays a role in the regulation of meristematic function in leaves, stems and inflorescences (PubMed:29051769, PubMed:29567670). May regulate leaf size, length of stem internodes, and seed size by promoting cell expansion (Probable) (PubMed:29051769). Transcription coactivator that plays a role in the regulation of grain size (PubMed:27107174, PubMed:29051769, PubMed:29567670). Component of a network formed by the microRNA396 (miRNA396), the GRFs and their interacting factors (GIFs) acting in the regulation of meristem function, at least partially through the control of cell proliferation (Probable). Component of the miRNA396c-GRF4-GIF1 regulatory module that plays an important role in grain size determination (PubMed:27107174).</text>
</comment>
<comment type="subunit">
    <text evidence="2">Interacts with GRF4.</text>
</comment>
<comment type="subcellular location">
    <subcellularLocation>
        <location evidence="3">Nucleus</location>
    </subcellularLocation>
    <subcellularLocation>
        <location evidence="3">Cytoplasm</location>
    </subcellularLocation>
    <text evidence="3">Localizes predominantly in the nucleus.</text>
</comment>
<comment type="tissue specificity">
    <text evidence="3">Highly expressed in internodes, nodes, developing spikelets and developing anthers (PubMed:29051769). Expressed at low levels in roots and mature glumes (PubMed:29051769).</text>
</comment>
<comment type="disruption phenotype">
    <text evidence="4">Reduced plant height, and short and narrow leaves.</text>
</comment>
<comment type="miscellaneous">
    <text evidence="3 4">Plants over-expressing GIF1 exhibit increased size of multiple organs, such as leaves, stems, panicles and grains.</text>
</comment>
<comment type="miscellaneous">
    <text evidence="9">'Makiba' means 'pasture land' in Japanese.</text>
</comment>
<comment type="similarity">
    <text evidence="7">Belongs to the SS18 family.</text>
</comment>
<accession>Q6AVI1</accession>
<gene>
    <name evidence="5" type="primary">GIF1</name>
    <name evidence="6" type="synonym">AN3</name>
    <name evidence="6" type="synonym">MKB3</name>
    <name evidence="13" type="ordered locus">Os03g0733600</name>
    <name evidence="12" type="ordered locus">LOC_Os03g52320</name>
    <name evidence="11" type="ORF">OSJNBa0027J18.22</name>
    <name evidence="10" type="ORF">OSJNBa0079G12.3</name>
</gene>
<name>GIF1_ORYSJ</name>